<evidence type="ECO:0000255" key="1">
    <source>
        <dbReference type="HAMAP-Rule" id="MF_01662"/>
    </source>
</evidence>
<reference key="1">
    <citation type="journal article" date="2006" name="Proc. Natl. Acad. Sci. U.S.A.">
        <title>Identification of genes subject to positive selection in uropathogenic strains of Escherichia coli: a comparative genomics approach.</title>
        <authorList>
            <person name="Chen S.L."/>
            <person name="Hung C.-S."/>
            <person name="Xu J."/>
            <person name="Reigstad C.S."/>
            <person name="Magrini V."/>
            <person name="Sabo A."/>
            <person name="Blasiar D."/>
            <person name="Bieri T."/>
            <person name="Meyer R.R."/>
            <person name="Ozersky P."/>
            <person name="Armstrong J.R."/>
            <person name="Fulton R.S."/>
            <person name="Latreille J.P."/>
            <person name="Spieth J."/>
            <person name="Hooton T.M."/>
            <person name="Mardis E.R."/>
            <person name="Hultgren S.J."/>
            <person name="Gordon J.I."/>
        </authorList>
    </citation>
    <scope>NUCLEOTIDE SEQUENCE [LARGE SCALE GENOMIC DNA]</scope>
    <source>
        <strain>UTI89 / UPEC</strain>
    </source>
</reference>
<gene>
    <name evidence="1" type="primary">fucU</name>
    <name type="ordered locus">UTI89_C3176</name>
</gene>
<organism>
    <name type="scientific">Escherichia coli (strain UTI89 / UPEC)</name>
    <dbReference type="NCBI Taxonomy" id="364106"/>
    <lineage>
        <taxon>Bacteria</taxon>
        <taxon>Pseudomonadati</taxon>
        <taxon>Pseudomonadota</taxon>
        <taxon>Gammaproteobacteria</taxon>
        <taxon>Enterobacterales</taxon>
        <taxon>Enterobacteriaceae</taxon>
        <taxon>Escherichia</taxon>
    </lineage>
</organism>
<name>FUCM_ECOUT</name>
<accession>Q1R7N6</accession>
<protein>
    <recommendedName>
        <fullName evidence="1">L-fucose mutarotase</fullName>
        <ecNumber evidence="1">5.1.3.29</ecNumber>
    </recommendedName>
    <alternativeName>
        <fullName evidence="1">Fucose 1-epimerase</fullName>
    </alternativeName>
    <alternativeName>
        <fullName evidence="1">Type-2 mutarotase</fullName>
    </alternativeName>
</protein>
<sequence>MLKTISPLISPELLKVLAEMGHGDEIIFSDAHFPAHSMGPQVIRADGLLVSDLLQAIIPLFELDSYAPPLVMMAAVEGDTLDPEVERRYRNALSLQAPCPDIIRINRFAFYERAQKAFAIVITGERAKYGNILLKKGVTP</sequence>
<dbReference type="EC" id="5.1.3.29" evidence="1"/>
<dbReference type="EMBL" id="CP000243">
    <property type="protein sequence ID" value="ABE08628.1"/>
    <property type="molecule type" value="Genomic_DNA"/>
</dbReference>
<dbReference type="RefSeq" id="WP_000920840.1">
    <property type="nucleotide sequence ID" value="NZ_CP064825.1"/>
</dbReference>
<dbReference type="SMR" id="Q1R7N6"/>
<dbReference type="GeneID" id="93779194"/>
<dbReference type="KEGG" id="eci:UTI89_C3176"/>
<dbReference type="HOGENOM" id="CLU_120075_1_0_6"/>
<dbReference type="UniPathway" id="UPA00956"/>
<dbReference type="Proteomes" id="UP000001952">
    <property type="component" value="Chromosome"/>
</dbReference>
<dbReference type="GO" id="GO:0005737">
    <property type="term" value="C:cytoplasm"/>
    <property type="evidence" value="ECO:0007669"/>
    <property type="project" value="UniProtKB-SubCell"/>
</dbReference>
<dbReference type="GO" id="GO:0042806">
    <property type="term" value="F:fucose binding"/>
    <property type="evidence" value="ECO:0007669"/>
    <property type="project" value="InterPro"/>
</dbReference>
<dbReference type="GO" id="GO:0036373">
    <property type="term" value="F:L-fucose mutarotase activity"/>
    <property type="evidence" value="ECO:0007669"/>
    <property type="project" value="UniProtKB-EC"/>
</dbReference>
<dbReference type="GO" id="GO:0036065">
    <property type="term" value="P:fucosylation"/>
    <property type="evidence" value="ECO:0007669"/>
    <property type="project" value="TreeGrafter"/>
</dbReference>
<dbReference type="GO" id="GO:0042354">
    <property type="term" value="P:L-fucose metabolic process"/>
    <property type="evidence" value="ECO:0007669"/>
    <property type="project" value="UniProtKB-UniRule"/>
</dbReference>
<dbReference type="FunFam" id="3.40.1650.10:FF:000001">
    <property type="entry name" value="L-fucose mutarotase"/>
    <property type="match status" value="1"/>
</dbReference>
<dbReference type="Gene3D" id="3.40.1650.10">
    <property type="entry name" value="RbsD-like domain"/>
    <property type="match status" value="1"/>
</dbReference>
<dbReference type="HAMAP" id="MF_01662">
    <property type="entry name" value="L_fucose_rotase"/>
    <property type="match status" value="1"/>
</dbReference>
<dbReference type="InterPro" id="IPR023751">
    <property type="entry name" value="L-fucose_mutarotase"/>
</dbReference>
<dbReference type="InterPro" id="IPR023750">
    <property type="entry name" value="RbsD-like_sf"/>
</dbReference>
<dbReference type="InterPro" id="IPR050443">
    <property type="entry name" value="RbsD/FucU_mutarotase"/>
</dbReference>
<dbReference type="InterPro" id="IPR007721">
    <property type="entry name" value="RbsD_FucU"/>
</dbReference>
<dbReference type="NCBIfam" id="NF011949">
    <property type="entry name" value="PRK15420.1"/>
    <property type="match status" value="1"/>
</dbReference>
<dbReference type="PANTHER" id="PTHR31690">
    <property type="entry name" value="FUCOSE MUTAROTASE"/>
    <property type="match status" value="1"/>
</dbReference>
<dbReference type="PANTHER" id="PTHR31690:SF4">
    <property type="entry name" value="FUCOSE MUTAROTASE"/>
    <property type="match status" value="1"/>
</dbReference>
<dbReference type="Pfam" id="PF05025">
    <property type="entry name" value="RbsD_FucU"/>
    <property type="match status" value="1"/>
</dbReference>
<dbReference type="SUPFAM" id="SSF102546">
    <property type="entry name" value="RbsD-like"/>
    <property type="match status" value="1"/>
</dbReference>
<keyword id="KW-0119">Carbohydrate metabolism</keyword>
<keyword id="KW-0963">Cytoplasm</keyword>
<keyword id="KW-0294">Fucose metabolism</keyword>
<keyword id="KW-0413">Isomerase</keyword>
<feature type="chain" id="PRO_0000344541" description="L-fucose mutarotase">
    <location>
        <begin position="1"/>
        <end position="140"/>
    </location>
</feature>
<feature type="active site" description="Proton donor" evidence="1">
    <location>
        <position position="22"/>
    </location>
</feature>
<feature type="binding site" evidence="1">
    <location>
        <position position="30"/>
    </location>
    <ligand>
        <name>substrate</name>
    </ligand>
</feature>
<feature type="binding site" evidence="1">
    <location>
        <position position="107"/>
    </location>
    <ligand>
        <name>substrate</name>
    </ligand>
</feature>
<feature type="binding site" evidence="1">
    <location>
        <begin position="129"/>
        <end position="131"/>
    </location>
    <ligand>
        <name>substrate</name>
    </ligand>
</feature>
<proteinExistence type="inferred from homology"/>
<comment type="function">
    <text evidence="1">Involved in the anomeric conversion of L-fucose.</text>
</comment>
<comment type="catalytic activity">
    <reaction evidence="1">
        <text>alpha-L-fucose = beta-L-fucose</text>
        <dbReference type="Rhea" id="RHEA:25580"/>
        <dbReference type="ChEBI" id="CHEBI:42548"/>
        <dbReference type="ChEBI" id="CHEBI:42589"/>
        <dbReference type="EC" id="5.1.3.29"/>
    </reaction>
</comment>
<comment type="pathway">
    <text evidence="1">Carbohydrate metabolism; L-fucose metabolism.</text>
</comment>
<comment type="subunit">
    <text evidence="1">Homodecamer.</text>
</comment>
<comment type="subcellular location">
    <subcellularLocation>
        <location evidence="1">Cytoplasm</location>
    </subcellularLocation>
</comment>
<comment type="similarity">
    <text evidence="1">Belongs to the RbsD / FucU family. FucU mutarotase subfamily.</text>
</comment>